<protein>
    <recommendedName>
        <fullName>Riboflavin kinase</fullName>
        <shortName>RFK</shortName>
        <ecNumber>2.7.1.161</ecNumber>
    </recommendedName>
    <alternativeName>
        <fullName>CTP-dependent riboflavin kinase</fullName>
    </alternativeName>
    <alternativeName>
        <fullName>CTP:riboflavin 5'-phosphotransferase</fullName>
    </alternativeName>
    <alternativeName>
        <fullName>Flavokinase</fullName>
    </alternativeName>
</protein>
<dbReference type="EC" id="2.7.1.161"/>
<dbReference type="EMBL" id="AE000782">
    <property type="protein sequence ID" value="AAB89142.1"/>
    <property type="molecule type" value="Genomic_DNA"/>
</dbReference>
<dbReference type="PIR" id="B69513">
    <property type="entry name" value="B69513"/>
</dbReference>
<dbReference type="RefSeq" id="WP_010879597.1">
    <property type="nucleotide sequence ID" value="NC_000917.1"/>
</dbReference>
<dbReference type="SMR" id="O28174"/>
<dbReference type="STRING" id="224325.AF_2106"/>
<dbReference type="PaxDb" id="224325-AF_2106"/>
<dbReference type="DNASU" id="1485335"/>
<dbReference type="EnsemblBacteria" id="AAB89142">
    <property type="protein sequence ID" value="AAB89142"/>
    <property type="gene ID" value="AF_2106"/>
</dbReference>
<dbReference type="GeneID" id="1485335"/>
<dbReference type="KEGG" id="afu:AF_2106"/>
<dbReference type="eggNOG" id="arCOG01904">
    <property type="taxonomic scope" value="Archaea"/>
</dbReference>
<dbReference type="HOGENOM" id="CLU_088476_0_0_2"/>
<dbReference type="OrthoDB" id="30955at2157"/>
<dbReference type="PhylomeDB" id="O28174"/>
<dbReference type="UniPathway" id="UPA00276">
    <property type="reaction ID" value="UER00929"/>
</dbReference>
<dbReference type="Proteomes" id="UP000002199">
    <property type="component" value="Chromosome"/>
</dbReference>
<dbReference type="GO" id="GO:0000287">
    <property type="term" value="F:magnesium ion binding"/>
    <property type="evidence" value="ECO:0007669"/>
    <property type="project" value="UniProtKB-UniRule"/>
</dbReference>
<dbReference type="GO" id="GO:0000166">
    <property type="term" value="F:nucleotide binding"/>
    <property type="evidence" value="ECO:0007669"/>
    <property type="project" value="UniProtKB-UniRule"/>
</dbReference>
<dbReference type="GO" id="GO:0008531">
    <property type="term" value="F:riboflavin kinase activity"/>
    <property type="evidence" value="ECO:0007669"/>
    <property type="project" value="InterPro"/>
</dbReference>
<dbReference type="GO" id="GO:0043565">
    <property type="term" value="F:sequence-specific DNA binding"/>
    <property type="evidence" value="ECO:0007669"/>
    <property type="project" value="InterPro"/>
</dbReference>
<dbReference type="GO" id="GO:0009398">
    <property type="term" value="P:FMN biosynthetic process"/>
    <property type="evidence" value="ECO:0007669"/>
    <property type="project" value="UniProtKB-UniRule"/>
</dbReference>
<dbReference type="GO" id="GO:0006355">
    <property type="term" value="P:regulation of DNA-templated transcription"/>
    <property type="evidence" value="ECO:0007669"/>
    <property type="project" value="InterPro"/>
</dbReference>
<dbReference type="GO" id="GO:0009231">
    <property type="term" value="P:riboflavin biosynthetic process"/>
    <property type="evidence" value="ECO:0007669"/>
    <property type="project" value="InterPro"/>
</dbReference>
<dbReference type="Gene3D" id="2.40.30.30">
    <property type="entry name" value="Riboflavin kinase-like"/>
    <property type="match status" value="1"/>
</dbReference>
<dbReference type="Gene3D" id="1.10.10.10">
    <property type="entry name" value="Winged helix-like DNA-binding domain superfamily/Winged helix DNA-binding domain"/>
    <property type="match status" value="1"/>
</dbReference>
<dbReference type="HAMAP" id="MF_01285">
    <property type="entry name" value="Riboflavin_kinase"/>
    <property type="match status" value="1"/>
</dbReference>
<dbReference type="InterPro" id="IPR000485">
    <property type="entry name" value="AsnC-type_HTH_dom"/>
</dbReference>
<dbReference type="InterPro" id="IPR012318">
    <property type="entry name" value="HTH_CRP"/>
</dbReference>
<dbReference type="InterPro" id="IPR039063">
    <property type="entry name" value="RibK_CTP-dep"/>
</dbReference>
<dbReference type="InterPro" id="IPR023470">
    <property type="entry name" value="Riboflavin_kinase_archaeal"/>
</dbReference>
<dbReference type="InterPro" id="IPR023602">
    <property type="entry name" value="Riboflavin_kinase_CTP-dep"/>
</dbReference>
<dbReference type="InterPro" id="IPR023465">
    <property type="entry name" value="Riboflavin_kinase_dom_sf"/>
</dbReference>
<dbReference type="InterPro" id="IPR036388">
    <property type="entry name" value="WH-like_DNA-bd_sf"/>
</dbReference>
<dbReference type="InterPro" id="IPR036390">
    <property type="entry name" value="WH_DNA-bd_sf"/>
</dbReference>
<dbReference type="NCBIfam" id="NF010762">
    <property type="entry name" value="PRK14165.1"/>
    <property type="match status" value="1"/>
</dbReference>
<dbReference type="PANTHER" id="PTHR40706">
    <property type="entry name" value="RIBOFLAVIN KINASE"/>
    <property type="match status" value="1"/>
</dbReference>
<dbReference type="PANTHER" id="PTHR40706:SF1">
    <property type="entry name" value="RIBOFLAVIN KINASE"/>
    <property type="match status" value="1"/>
</dbReference>
<dbReference type="Pfam" id="PF01982">
    <property type="entry name" value="CTP-dep_RFKase"/>
    <property type="match status" value="1"/>
</dbReference>
<dbReference type="Pfam" id="PF13412">
    <property type="entry name" value="HTH_24"/>
    <property type="match status" value="1"/>
</dbReference>
<dbReference type="PRINTS" id="PR00033">
    <property type="entry name" value="HTHASNC"/>
</dbReference>
<dbReference type="PRINTS" id="PR00034">
    <property type="entry name" value="HTHCRP"/>
</dbReference>
<dbReference type="SMART" id="SM00419">
    <property type="entry name" value="HTH_CRP"/>
    <property type="match status" value="1"/>
</dbReference>
<dbReference type="SUPFAM" id="SSF82114">
    <property type="entry name" value="Riboflavin kinase-like"/>
    <property type="match status" value="1"/>
</dbReference>
<dbReference type="SUPFAM" id="SSF46785">
    <property type="entry name" value="Winged helix' DNA-binding domain"/>
    <property type="match status" value="1"/>
</dbReference>
<evidence type="ECO:0000250" key="1"/>
<evidence type="ECO:0000305" key="2"/>
<name>RIFK_ARCFU</name>
<keyword id="KW-0285">Flavoprotein</keyword>
<keyword id="KW-0288">FMN</keyword>
<keyword id="KW-0418">Kinase</keyword>
<keyword id="KW-0460">Magnesium</keyword>
<keyword id="KW-0479">Metal-binding</keyword>
<keyword id="KW-0547">Nucleotide-binding</keyword>
<keyword id="KW-1185">Reference proteome</keyword>
<keyword id="KW-0808">Transferase</keyword>
<comment type="function">
    <text evidence="1">Catalyzes the CTP-dependent phosphorylation of riboflavin (vitamin B2) to form flavin mononucleotide (FMN).</text>
</comment>
<comment type="catalytic activity">
    <reaction>
        <text>riboflavin + CTP = CDP + FMN + H(+)</text>
        <dbReference type="Rhea" id="RHEA:25021"/>
        <dbReference type="ChEBI" id="CHEBI:15378"/>
        <dbReference type="ChEBI" id="CHEBI:37563"/>
        <dbReference type="ChEBI" id="CHEBI:57986"/>
        <dbReference type="ChEBI" id="CHEBI:58069"/>
        <dbReference type="ChEBI" id="CHEBI:58210"/>
        <dbReference type="EC" id="2.7.1.161"/>
    </reaction>
</comment>
<comment type="cofactor">
    <cofactor evidence="1">
        <name>Mg(2+)</name>
        <dbReference type="ChEBI" id="CHEBI:18420"/>
    </cofactor>
    <text evidence="1">Binds 1 Mg(2+) ion per subunit.</text>
</comment>
<comment type="pathway">
    <text>Cofactor biosynthesis; FMN biosynthesis; FMN from riboflavin (CTP route): step 1/1.</text>
</comment>
<comment type="similarity">
    <text evidence="2">Belongs to the archaeal riboflavin kinase family.</text>
</comment>
<reference key="1">
    <citation type="journal article" date="1997" name="Nature">
        <title>The complete genome sequence of the hyperthermophilic, sulphate-reducing archaeon Archaeoglobus fulgidus.</title>
        <authorList>
            <person name="Klenk H.-P."/>
            <person name="Clayton R.A."/>
            <person name="Tomb J.-F."/>
            <person name="White O."/>
            <person name="Nelson K.E."/>
            <person name="Ketchum K.A."/>
            <person name="Dodson R.J."/>
            <person name="Gwinn M.L."/>
            <person name="Hickey E.K."/>
            <person name="Peterson J.D."/>
            <person name="Richardson D.L."/>
            <person name="Kerlavage A.R."/>
            <person name="Graham D.E."/>
            <person name="Kyrpides N.C."/>
            <person name="Fleischmann R.D."/>
            <person name="Quackenbush J."/>
            <person name="Lee N.H."/>
            <person name="Sutton G.G."/>
            <person name="Gill S.R."/>
            <person name="Kirkness E.F."/>
            <person name="Dougherty B.A."/>
            <person name="McKenney K."/>
            <person name="Adams M.D."/>
            <person name="Loftus B.J."/>
            <person name="Peterson S.N."/>
            <person name="Reich C.I."/>
            <person name="McNeil L.K."/>
            <person name="Badger J.H."/>
            <person name="Glodek A."/>
            <person name="Zhou L."/>
            <person name="Overbeek R."/>
            <person name="Gocayne J.D."/>
            <person name="Weidman J.F."/>
            <person name="McDonald L.A."/>
            <person name="Utterback T.R."/>
            <person name="Cotton M.D."/>
            <person name="Spriggs T."/>
            <person name="Artiach P."/>
            <person name="Kaine B.P."/>
            <person name="Sykes S.M."/>
            <person name="Sadow P.W."/>
            <person name="D'Andrea K.P."/>
            <person name="Bowman C."/>
            <person name="Fujii C."/>
            <person name="Garland S.A."/>
            <person name="Mason T.M."/>
            <person name="Olsen G.J."/>
            <person name="Fraser C.M."/>
            <person name="Smith H.O."/>
            <person name="Woese C.R."/>
            <person name="Venter J.C."/>
        </authorList>
    </citation>
    <scope>NUCLEOTIDE SEQUENCE [LARGE SCALE GENOMIC DNA]</scope>
    <source>
        <strain>ATCC 49558 / DSM 4304 / JCM 9628 / NBRC 100126 / VC-16</strain>
    </source>
</reference>
<organism>
    <name type="scientific">Archaeoglobus fulgidus (strain ATCC 49558 / DSM 4304 / JCM 9628 / NBRC 100126 / VC-16)</name>
    <dbReference type="NCBI Taxonomy" id="224325"/>
    <lineage>
        <taxon>Archaea</taxon>
        <taxon>Methanobacteriati</taxon>
        <taxon>Methanobacteriota</taxon>
        <taxon>Archaeoglobi</taxon>
        <taxon>Archaeoglobales</taxon>
        <taxon>Archaeoglobaceae</taxon>
        <taxon>Archaeoglobus</taxon>
    </lineage>
</organism>
<gene>
    <name type="primary">ribK</name>
    <name type="ordered locus">AF_2106</name>
</gene>
<feature type="chain" id="PRO_0000322082" description="Riboflavin kinase">
    <location>
        <begin position="1"/>
        <end position="233"/>
    </location>
</feature>
<feature type="region of interest" description="H-T-H motif-like">
    <location>
        <begin position="1"/>
        <end position="104"/>
    </location>
</feature>
<feature type="region of interest" description="Riboflavin kinase">
    <location>
        <begin position="105"/>
        <end position="233"/>
    </location>
</feature>
<feature type="binding site" evidence="1">
    <location>
        <begin position="114"/>
        <end position="119"/>
    </location>
    <ligand>
        <name>CDP</name>
        <dbReference type="ChEBI" id="CHEBI:58069"/>
    </ligand>
</feature>
<feature type="binding site" evidence="1">
    <location>
        <position position="143"/>
    </location>
    <ligand>
        <name>Mg(2+)</name>
        <dbReference type="ChEBI" id="CHEBI:18420"/>
    </ligand>
</feature>
<feature type="binding site" evidence="1">
    <location>
        <position position="145"/>
    </location>
    <ligand>
        <name>Mg(2+)</name>
        <dbReference type="ChEBI" id="CHEBI:18420"/>
    </ligand>
</feature>
<feature type="binding site" evidence="1">
    <location>
        <position position="200"/>
    </location>
    <ligand>
        <name>FMN</name>
        <dbReference type="ChEBI" id="CHEBI:58210"/>
    </ligand>
</feature>
<feature type="binding site" evidence="1">
    <location>
        <position position="208"/>
    </location>
    <ligand>
        <name>FMN</name>
        <dbReference type="ChEBI" id="CHEBI:58210"/>
    </ligand>
</feature>
<feature type="binding site" evidence="1">
    <location>
        <begin position="213"/>
        <end position="216"/>
    </location>
    <ligand>
        <name>CDP</name>
        <dbReference type="ChEBI" id="CHEBI:58069"/>
    </ligand>
</feature>
<sequence length="233" mass="26975">MVRDIKTFKFFEVLLIYEMLEVLKALAMMNATRKVVKISSKELAEHIGQSLQTAARKLKELEDEGLIDRTLTKDGQFVVITEKGKQLLYKEYMDYKKIFDDEGTIKIKGEVFSGVGEGRYYVSLEGYRKQFREKLGFDPYPGTLNLRIPKEEMYFRRRLDEERGILIEGFSTEDRTFGEVKAFKCRINGIEGAIVIPKRTHYPAEILEVISPVKLRDKLGLKDGDFVEVEVIL</sequence>
<proteinExistence type="inferred from homology"/>
<accession>O28174</accession>